<evidence type="ECO:0000250" key="1"/>
<evidence type="ECO:0000255" key="2">
    <source>
        <dbReference type="PROSITE-ProRule" id="PRU00080"/>
    </source>
</evidence>
<evidence type="ECO:0000269" key="3">
    <source>
    </source>
</evidence>
<evidence type="ECO:0000305" key="4"/>
<feature type="chain" id="PRO_0000119867" description="F-box/LRR-repeat protein 18">
    <location>
        <begin position="1"/>
        <end position="718"/>
    </location>
</feature>
<feature type="domain" description="F-box" evidence="2">
    <location>
        <begin position="25"/>
        <end position="72"/>
    </location>
</feature>
<feature type="repeat" description="LRR 1">
    <location>
        <begin position="77"/>
        <end position="103"/>
    </location>
</feature>
<feature type="repeat" description="LRR 2">
    <location>
        <begin position="104"/>
        <end position="128"/>
    </location>
</feature>
<feature type="repeat" description="LRR 3">
    <location>
        <begin position="129"/>
        <end position="153"/>
    </location>
</feature>
<feature type="repeat" description="LRR 4">
    <location>
        <begin position="177"/>
        <end position="201"/>
    </location>
</feature>
<feature type="repeat" description="LRR 5">
    <location>
        <begin position="324"/>
        <end position="352"/>
    </location>
</feature>
<feature type="repeat" description="LRR 6">
    <location>
        <begin position="367"/>
        <end position="392"/>
    </location>
</feature>
<feature type="repeat" description="LRR 7">
    <location>
        <begin position="393"/>
        <end position="422"/>
    </location>
</feature>
<feature type="repeat" description="LRR 8">
    <location>
        <begin position="468"/>
        <end position="492"/>
    </location>
</feature>
<feature type="repeat" description="LRR 9">
    <location>
        <begin position="516"/>
        <end position="540"/>
    </location>
</feature>
<feature type="repeat" description="LRR 10">
    <location>
        <begin position="542"/>
        <end position="567"/>
    </location>
</feature>
<feature type="repeat" description="LRR 11">
    <location>
        <begin position="572"/>
        <end position="597"/>
    </location>
</feature>
<feature type="repeat" description="LRR 12">
    <location>
        <begin position="599"/>
        <end position="623"/>
    </location>
</feature>
<feature type="splice variant" id="VSP_061754" description="In isoform 3.">
    <original>RK</original>
    <variation>CR</variation>
    <location>
        <begin position="364"/>
        <end position="365"/>
    </location>
</feature>
<feature type="splice variant" id="VSP_061755" description="In isoform 3.">
    <location>
        <begin position="366"/>
        <end position="718"/>
    </location>
</feature>
<feature type="splice variant" id="VSP_061756" description="In isoform 1.">
    <original>SFQAERPALNVVIFPLLHEGLTDVIRDVPLVHLDEITLFKSRVAEEPPNLWW</original>
    <variation>RWGEVTGRRPQLFTELREEPSARTSRATGRRQPCLPDSGVVCCPCGRPLAVSGIILVGVSPSLVVKTTCVYRVLFKNLDYASIFFLVCLFETESHSVVQAGVQWRDLSSLQPLLSGLQPQPPEQLENELEIGFSYCFVI</variation>
    <location>
        <begin position="667"/>
        <end position="718"/>
    </location>
</feature>
<feature type="splice variant" id="VSP_061757" description="In isoform 5.">
    <original>SFQAERPALNVVIFPLLHEGLTDVIRDVPLVHLDEITLFKSRVAEEPPNLWW</original>
    <variation>RWGEVTGRRPQLFTELREEPSARTSRATGRRQPCLPDSGVVCCPCGRPLAVSGIILVGVSPSLVVKTTCVYRVLFKNLDYASIFFLVCLFETESHSVVQAGVQWRDLSSLQPLLSGLQPQPPEQLGLQVCTTIPG</variation>
    <location>
        <begin position="667"/>
        <end position="718"/>
    </location>
</feature>
<feature type="splice variant" id="VSP_061758" description="In isoform 2.">
    <original>F</original>
    <variation>R</variation>
    <location>
        <position position="668"/>
    </location>
</feature>
<feature type="splice variant" id="VSP_061759" description="In isoform 2.">
    <location>
        <begin position="669"/>
        <end position="718"/>
    </location>
</feature>
<feature type="sequence variant" id="VAR_055800" description="In dbSNP:rs33941092.">
    <original>N</original>
    <variation>K</variation>
    <location>
        <position position="552"/>
    </location>
</feature>
<feature type="sequence conflict" description="In Ref. 1; BAG58024." evidence="4" ref="1">
    <original>G</original>
    <variation>D</variation>
    <location>
        <position position="128"/>
    </location>
</feature>
<feature type="sequence conflict" description="In Ref. 1; BAG53041." evidence="4" ref="1">
    <original>N</original>
    <variation>G</variation>
    <location>
        <position position="349"/>
    </location>
</feature>
<feature type="sequence conflict" description="In Ref. 1; BAG58024." evidence="4" ref="1">
    <original>N</original>
    <variation>H</variation>
    <location>
        <position position="494"/>
    </location>
</feature>
<feature type="sequence conflict" description="In Ref. 1; BAB13838." evidence="4" ref="1">
    <original>L</original>
    <variation>P</variation>
    <location>
        <position position="555"/>
    </location>
</feature>
<feature type="sequence variant" id="VAR_087450" description="In dbSNP:rs28566736." evidence="3">
    <original>R</original>
    <variation>C</variation>
    <location sequence="Q96ME1-5">
        <position position="696"/>
    </location>
</feature>
<feature type="sequence variant" id="VAR_087451" description="In dbSNP:rs148642174." evidence="3">
    <original>V</original>
    <variation>I</variation>
    <location sequence="Q96ME1-5">
        <position position="723"/>
    </location>
</feature>
<gene>
    <name type="primary">FBXL18</name>
    <name type="synonym">FBL18</name>
</gene>
<organism>
    <name type="scientific">Homo sapiens</name>
    <name type="common">Human</name>
    <dbReference type="NCBI Taxonomy" id="9606"/>
    <lineage>
        <taxon>Eukaryota</taxon>
        <taxon>Metazoa</taxon>
        <taxon>Chordata</taxon>
        <taxon>Craniata</taxon>
        <taxon>Vertebrata</taxon>
        <taxon>Euteleostomi</taxon>
        <taxon>Mammalia</taxon>
        <taxon>Eutheria</taxon>
        <taxon>Euarchontoglires</taxon>
        <taxon>Primates</taxon>
        <taxon>Haplorrhini</taxon>
        <taxon>Catarrhini</taxon>
        <taxon>Hominidae</taxon>
        <taxon>Homo</taxon>
    </lineage>
</organism>
<dbReference type="EMBL" id="AK021529">
    <property type="protein sequence ID" value="BAB13838.1"/>
    <property type="status" value="ALT_INIT"/>
    <property type="molecule type" value="mRNA"/>
</dbReference>
<dbReference type="EMBL" id="AK057042">
    <property type="protein sequence ID" value="BAB71354.1"/>
    <property type="molecule type" value="mRNA"/>
</dbReference>
<dbReference type="EMBL" id="AK095394">
    <property type="protein sequence ID" value="BAG53041.1"/>
    <property type="status" value="ALT_INIT"/>
    <property type="molecule type" value="mRNA"/>
</dbReference>
<dbReference type="EMBL" id="AK294949">
    <property type="protein sequence ID" value="BAG58024.1"/>
    <property type="molecule type" value="mRNA"/>
</dbReference>
<dbReference type="EMBL" id="AC006483">
    <property type="status" value="NOT_ANNOTATED_CDS"/>
    <property type="molecule type" value="Genomic_DNA"/>
</dbReference>
<dbReference type="EMBL" id="AC092171">
    <property type="status" value="NOT_ANNOTATED_CDS"/>
    <property type="molecule type" value="Genomic_DNA"/>
</dbReference>
<dbReference type="EMBL" id="CH471144">
    <property type="protein sequence ID" value="EAW87338.1"/>
    <property type="molecule type" value="Genomic_DNA"/>
</dbReference>
<dbReference type="EMBL" id="CH471144">
    <property type="protein sequence ID" value="EAW87339.1"/>
    <property type="molecule type" value="Genomic_DNA"/>
</dbReference>
<dbReference type="EMBL" id="BC004228">
    <property type="protein sequence ID" value="AAH04228.1"/>
    <property type="molecule type" value="mRNA"/>
</dbReference>
<dbReference type="EMBL" id="BC006426">
    <property type="protein sequence ID" value="AAH06426.2"/>
    <property type="molecule type" value="mRNA"/>
</dbReference>
<dbReference type="EMBL" id="BC024256">
    <property type="protein sequence ID" value="AAH24256.1"/>
    <property type="molecule type" value="mRNA"/>
</dbReference>
<dbReference type="CCDS" id="CCDS43546.1">
    <molecule id="Q96ME1-4"/>
</dbReference>
<dbReference type="RefSeq" id="NP_001308142.1">
    <molecule id="Q96ME1-5"/>
    <property type="nucleotide sequence ID" value="NM_001321213.2"/>
</dbReference>
<dbReference type="RefSeq" id="NP_079239.3">
    <molecule id="Q96ME1-4"/>
    <property type="nucleotide sequence ID" value="NM_024963.5"/>
</dbReference>
<dbReference type="BioGRID" id="123080">
    <property type="interactions" value="64"/>
</dbReference>
<dbReference type="ComplexPortal" id="CPX-2553">
    <property type="entry name" value="SCF E3 ubiquitin ligase complex, FBXL18 variant"/>
</dbReference>
<dbReference type="FunCoup" id="Q96ME1">
    <property type="interactions" value="427"/>
</dbReference>
<dbReference type="IntAct" id="Q96ME1">
    <property type="interactions" value="21"/>
</dbReference>
<dbReference type="MINT" id="Q96ME1"/>
<dbReference type="STRING" id="9606.ENSP00000371805"/>
<dbReference type="GlyGen" id="Q96ME1">
    <property type="glycosylation" value="1 site, 1 O-linked glycan (1 site)"/>
</dbReference>
<dbReference type="iPTMnet" id="Q96ME1"/>
<dbReference type="MetOSite" id="Q96ME1"/>
<dbReference type="PhosphoSitePlus" id="Q96ME1"/>
<dbReference type="SwissPalm" id="Q96ME1"/>
<dbReference type="BioMuta" id="FBXL18"/>
<dbReference type="DMDM" id="61213731"/>
<dbReference type="jPOST" id="Q96ME1"/>
<dbReference type="MassIVE" id="Q96ME1"/>
<dbReference type="PaxDb" id="9606-ENSP00000371805"/>
<dbReference type="PeptideAtlas" id="Q96ME1"/>
<dbReference type="ProteomicsDB" id="35218"/>
<dbReference type="ProteomicsDB" id="77339">
    <molecule id="Q96ME1-1"/>
</dbReference>
<dbReference type="ProteomicsDB" id="77340">
    <molecule id="Q96ME1-2"/>
</dbReference>
<dbReference type="ProteomicsDB" id="77341">
    <molecule id="Q96ME1-3"/>
</dbReference>
<dbReference type="ProteomicsDB" id="77342">
    <molecule id="Q96ME1-4"/>
</dbReference>
<dbReference type="Pumba" id="Q96ME1"/>
<dbReference type="Antibodypedia" id="24615">
    <property type="antibodies" value="100 antibodies from 21 providers"/>
</dbReference>
<dbReference type="Ensembl" id="ENST00000382368.8">
    <molecule id="Q96ME1-4"/>
    <property type="protein sequence ID" value="ENSP00000371805.3"/>
    <property type="gene ID" value="ENSG00000155034.21"/>
</dbReference>
<dbReference type="Ensembl" id="ENST00000415009.5">
    <molecule id="Q96ME1-2"/>
    <property type="protein sequence ID" value="ENSP00000415064.1"/>
    <property type="gene ID" value="ENSG00000155034.21"/>
</dbReference>
<dbReference type="GeneID" id="80028"/>
<dbReference type="KEGG" id="hsa:80028"/>
<dbReference type="MANE-Select" id="ENST00000382368.8">
    <property type="protein sequence ID" value="ENSP00000371805.3"/>
    <property type="RefSeq nucleotide sequence ID" value="NM_024963.6"/>
    <property type="RefSeq protein sequence ID" value="NP_079239.3"/>
</dbReference>
<dbReference type="UCSC" id="uc003son.5">
    <molecule id="Q96ME1-4"/>
    <property type="organism name" value="human"/>
</dbReference>
<dbReference type="UCSC" id="uc064beg.1">
    <property type="organism name" value="human"/>
</dbReference>
<dbReference type="AGR" id="HGNC:21874"/>
<dbReference type="CTD" id="80028"/>
<dbReference type="GeneCards" id="FBXL18"/>
<dbReference type="HGNC" id="HGNC:21874">
    <property type="gene designation" value="FBXL18"/>
</dbReference>
<dbReference type="HPA" id="ENSG00000155034">
    <property type="expression patterns" value="Low tissue specificity"/>
</dbReference>
<dbReference type="MIM" id="609084">
    <property type="type" value="gene"/>
</dbReference>
<dbReference type="neXtProt" id="NX_Q96ME1"/>
<dbReference type="OpenTargets" id="ENSG00000155034"/>
<dbReference type="PharmGKB" id="PA134949446"/>
<dbReference type="VEuPathDB" id="HostDB:ENSG00000155034"/>
<dbReference type="eggNOG" id="ENOG502QVW9">
    <property type="taxonomic scope" value="Eukaryota"/>
</dbReference>
<dbReference type="GeneTree" id="ENSGT00390000015109"/>
<dbReference type="HOGENOM" id="CLU_758549_0_0_1"/>
<dbReference type="InParanoid" id="Q96ME1"/>
<dbReference type="OMA" id="VLYSECR"/>
<dbReference type="OrthoDB" id="9856535at2759"/>
<dbReference type="PAN-GO" id="Q96ME1">
    <property type="GO annotations" value="2 GO annotations based on evolutionary models"/>
</dbReference>
<dbReference type="PhylomeDB" id="Q96ME1"/>
<dbReference type="TreeFam" id="TF331865"/>
<dbReference type="PathwayCommons" id="Q96ME1"/>
<dbReference type="Reactome" id="R-HSA-8854050">
    <property type="pathway name" value="FBXL7 down-regulates AURKA during mitotic entry and in early mitosis"/>
</dbReference>
<dbReference type="Reactome" id="R-HSA-8951664">
    <property type="pathway name" value="Neddylation"/>
</dbReference>
<dbReference type="Reactome" id="R-HSA-983168">
    <property type="pathway name" value="Antigen processing: Ubiquitination &amp; Proteasome degradation"/>
</dbReference>
<dbReference type="SignaLink" id="Q96ME1"/>
<dbReference type="SIGNOR" id="Q96ME1"/>
<dbReference type="BioGRID-ORCS" id="80028">
    <property type="hits" value="31 hits in 1196 CRISPR screens"/>
</dbReference>
<dbReference type="CD-CODE" id="804901D1">
    <property type="entry name" value="Nuclear speckle"/>
</dbReference>
<dbReference type="ChiTaRS" id="FBXL18">
    <property type="organism name" value="human"/>
</dbReference>
<dbReference type="Pharos" id="Q96ME1">
    <property type="development level" value="Tdark"/>
</dbReference>
<dbReference type="PRO" id="PR:Q96ME1"/>
<dbReference type="Proteomes" id="UP000005640">
    <property type="component" value="Chromosome 7"/>
</dbReference>
<dbReference type="RNAct" id="Q96ME1">
    <property type="molecule type" value="protein"/>
</dbReference>
<dbReference type="Bgee" id="ENSG00000155034">
    <property type="expression patterns" value="Expressed in lateral globus pallidus and 164 other cell types or tissues"/>
</dbReference>
<dbReference type="ExpressionAtlas" id="Q96ME1">
    <property type="expression patterns" value="baseline and differential"/>
</dbReference>
<dbReference type="GO" id="GO:0005829">
    <property type="term" value="C:cytosol"/>
    <property type="evidence" value="ECO:0000304"/>
    <property type="project" value="Reactome"/>
</dbReference>
<dbReference type="GO" id="GO:0031146">
    <property type="term" value="P:SCF-dependent proteasomal ubiquitin-dependent protein catabolic process"/>
    <property type="evidence" value="ECO:0007669"/>
    <property type="project" value="InterPro"/>
</dbReference>
<dbReference type="CDD" id="cd22128">
    <property type="entry name" value="F-box_FBXL18"/>
    <property type="match status" value="1"/>
</dbReference>
<dbReference type="FunFam" id="3.80.10.10:FF:000187">
    <property type="entry name" value="F-box and leucine rich repeat protein 18"/>
    <property type="match status" value="1"/>
</dbReference>
<dbReference type="FunFam" id="3.80.10.10:FF:000222">
    <property type="entry name" value="F-box and leucine rich repeat protein 18"/>
    <property type="match status" value="1"/>
</dbReference>
<dbReference type="FunFam" id="3.80.10.10:FF:000749">
    <property type="entry name" value="F-box and leucine rich repeat protein 18"/>
    <property type="match status" value="1"/>
</dbReference>
<dbReference type="Gene3D" id="3.80.10.10">
    <property type="entry name" value="Ribonuclease Inhibitor"/>
    <property type="match status" value="3"/>
</dbReference>
<dbReference type="InterPro" id="IPR036047">
    <property type="entry name" value="F-box-like_dom_sf"/>
</dbReference>
<dbReference type="InterPro" id="IPR001810">
    <property type="entry name" value="F-box_dom"/>
</dbReference>
<dbReference type="InterPro" id="IPR047948">
    <property type="entry name" value="FBXL18_F-box"/>
</dbReference>
<dbReference type="InterPro" id="IPR045627">
    <property type="entry name" value="FBXL18_LRR"/>
</dbReference>
<dbReference type="InterPro" id="IPR032675">
    <property type="entry name" value="LRR_dom_sf"/>
</dbReference>
<dbReference type="PANTHER" id="PTHR16134:SF19">
    <property type="entry name" value="F-BOX AND LEUCINE-RICH REPEAT PROTEIN 18"/>
    <property type="match status" value="1"/>
</dbReference>
<dbReference type="PANTHER" id="PTHR16134">
    <property type="entry name" value="F-BOX/TPR REPEAT PROTEIN POF3"/>
    <property type="match status" value="1"/>
</dbReference>
<dbReference type="Pfam" id="PF12937">
    <property type="entry name" value="F-box-like"/>
    <property type="match status" value="1"/>
</dbReference>
<dbReference type="Pfam" id="PF19729">
    <property type="entry name" value="LRR_FBXL18"/>
    <property type="match status" value="1"/>
</dbReference>
<dbReference type="SUPFAM" id="SSF81383">
    <property type="entry name" value="F-box domain"/>
    <property type="match status" value="1"/>
</dbReference>
<dbReference type="SUPFAM" id="SSF52047">
    <property type="entry name" value="RNI-like"/>
    <property type="match status" value="1"/>
</dbReference>
<dbReference type="PROSITE" id="PS50181">
    <property type="entry name" value="FBOX"/>
    <property type="match status" value="1"/>
</dbReference>
<reference key="1">
    <citation type="journal article" date="2004" name="Nat. Genet.">
        <title>Complete sequencing and characterization of 21,243 full-length human cDNAs.</title>
        <authorList>
            <person name="Ota T."/>
            <person name="Suzuki Y."/>
            <person name="Nishikawa T."/>
            <person name="Otsuki T."/>
            <person name="Sugiyama T."/>
            <person name="Irie R."/>
            <person name="Wakamatsu A."/>
            <person name="Hayashi K."/>
            <person name="Sato H."/>
            <person name="Nagai K."/>
            <person name="Kimura K."/>
            <person name="Makita H."/>
            <person name="Sekine M."/>
            <person name="Obayashi M."/>
            <person name="Nishi T."/>
            <person name="Shibahara T."/>
            <person name="Tanaka T."/>
            <person name="Ishii S."/>
            <person name="Yamamoto J."/>
            <person name="Saito K."/>
            <person name="Kawai Y."/>
            <person name="Isono Y."/>
            <person name="Nakamura Y."/>
            <person name="Nagahari K."/>
            <person name="Murakami K."/>
            <person name="Yasuda T."/>
            <person name="Iwayanagi T."/>
            <person name="Wagatsuma M."/>
            <person name="Shiratori A."/>
            <person name="Sudo H."/>
            <person name="Hosoiri T."/>
            <person name="Kaku Y."/>
            <person name="Kodaira H."/>
            <person name="Kondo H."/>
            <person name="Sugawara M."/>
            <person name="Takahashi M."/>
            <person name="Kanda K."/>
            <person name="Yokoi T."/>
            <person name="Furuya T."/>
            <person name="Kikkawa E."/>
            <person name="Omura Y."/>
            <person name="Abe K."/>
            <person name="Kamihara K."/>
            <person name="Katsuta N."/>
            <person name="Sato K."/>
            <person name="Tanikawa M."/>
            <person name="Yamazaki M."/>
            <person name="Ninomiya K."/>
            <person name="Ishibashi T."/>
            <person name="Yamashita H."/>
            <person name="Murakawa K."/>
            <person name="Fujimori K."/>
            <person name="Tanai H."/>
            <person name="Kimata M."/>
            <person name="Watanabe M."/>
            <person name="Hiraoka S."/>
            <person name="Chiba Y."/>
            <person name="Ishida S."/>
            <person name="Ono Y."/>
            <person name="Takiguchi S."/>
            <person name="Watanabe S."/>
            <person name="Yosida M."/>
            <person name="Hotuta T."/>
            <person name="Kusano J."/>
            <person name="Kanehori K."/>
            <person name="Takahashi-Fujii A."/>
            <person name="Hara H."/>
            <person name="Tanase T.-O."/>
            <person name="Nomura Y."/>
            <person name="Togiya S."/>
            <person name="Komai F."/>
            <person name="Hara R."/>
            <person name="Takeuchi K."/>
            <person name="Arita M."/>
            <person name="Imose N."/>
            <person name="Musashino K."/>
            <person name="Yuuki H."/>
            <person name="Oshima A."/>
            <person name="Sasaki N."/>
            <person name="Aotsuka S."/>
            <person name="Yoshikawa Y."/>
            <person name="Matsunawa H."/>
            <person name="Ichihara T."/>
            <person name="Shiohata N."/>
            <person name="Sano S."/>
            <person name="Moriya S."/>
            <person name="Momiyama H."/>
            <person name="Satoh N."/>
            <person name="Takami S."/>
            <person name="Terashima Y."/>
            <person name="Suzuki O."/>
            <person name="Nakagawa S."/>
            <person name="Senoh A."/>
            <person name="Mizoguchi H."/>
            <person name="Goto Y."/>
            <person name="Shimizu F."/>
            <person name="Wakebe H."/>
            <person name="Hishigaki H."/>
            <person name="Watanabe T."/>
            <person name="Sugiyama A."/>
            <person name="Takemoto M."/>
            <person name="Kawakami B."/>
            <person name="Yamazaki M."/>
            <person name="Watanabe K."/>
            <person name="Kumagai A."/>
            <person name="Itakura S."/>
            <person name="Fukuzumi Y."/>
            <person name="Fujimori Y."/>
            <person name="Komiyama M."/>
            <person name="Tashiro H."/>
            <person name="Tanigami A."/>
            <person name="Fujiwara T."/>
            <person name="Ono T."/>
            <person name="Yamada K."/>
            <person name="Fujii Y."/>
            <person name="Ozaki K."/>
            <person name="Hirao M."/>
            <person name="Ohmori Y."/>
            <person name="Kawabata A."/>
            <person name="Hikiji T."/>
            <person name="Kobatake N."/>
            <person name="Inagaki H."/>
            <person name="Ikema Y."/>
            <person name="Okamoto S."/>
            <person name="Okitani R."/>
            <person name="Kawakami T."/>
            <person name="Noguchi S."/>
            <person name="Itoh T."/>
            <person name="Shigeta K."/>
            <person name="Senba T."/>
            <person name="Matsumura K."/>
            <person name="Nakajima Y."/>
            <person name="Mizuno T."/>
            <person name="Morinaga M."/>
            <person name="Sasaki M."/>
            <person name="Togashi T."/>
            <person name="Oyama M."/>
            <person name="Hata H."/>
            <person name="Watanabe M."/>
            <person name="Komatsu T."/>
            <person name="Mizushima-Sugano J."/>
            <person name="Satoh T."/>
            <person name="Shirai Y."/>
            <person name="Takahashi Y."/>
            <person name="Nakagawa K."/>
            <person name="Okumura K."/>
            <person name="Nagase T."/>
            <person name="Nomura N."/>
            <person name="Kikuchi H."/>
            <person name="Masuho Y."/>
            <person name="Yamashita R."/>
            <person name="Nakai K."/>
            <person name="Yada T."/>
            <person name="Nakamura Y."/>
            <person name="Ohara O."/>
            <person name="Isogai T."/>
            <person name="Sugano S."/>
        </authorList>
    </citation>
    <scope>NUCLEOTIDE SEQUENCE [LARGE SCALE MRNA] (ISOFORMS 2 AND 5)</scope>
    <scope>NUCLEOTIDE SEQUENCE [LARGE SCALE MRNA] OF 424-718 (ISOFORM 1)</scope>
    <scope>VARIANTS CYS-696 AND ILE-723 (ISOFORM 5)</scope>
</reference>
<reference key="2">
    <citation type="journal article" date="2003" name="Nature">
        <title>The DNA sequence of human chromosome 7.</title>
        <authorList>
            <person name="Hillier L.W."/>
            <person name="Fulton R.S."/>
            <person name="Fulton L.A."/>
            <person name="Graves T.A."/>
            <person name="Pepin K.H."/>
            <person name="Wagner-McPherson C."/>
            <person name="Layman D."/>
            <person name="Maas J."/>
            <person name="Jaeger S."/>
            <person name="Walker R."/>
            <person name="Wylie K."/>
            <person name="Sekhon M."/>
            <person name="Becker M.C."/>
            <person name="O'Laughlin M.D."/>
            <person name="Schaller M.E."/>
            <person name="Fewell G.A."/>
            <person name="Delehaunty K.D."/>
            <person name="Miner T.L."/>
            <person name="Nash W.E."/>
            <person name="Cordes M."/>
            <person name="Du H."/>
            <person name="Sun H."/>
            <person name="Edwards J."/>
            <person name="Bradshaw-Cordum H."/>
            <person name="Ali J."/>
            <person name="Andrews S."/>
            <person name="Isak A."/>
            <person name="Vanbrunt A."/>
            <person name="Nguyen C."/>
            <person name="Du F."/>
            <person name="Lamar B."/>
            <person name="Courtney L."/>
            <person name="Kalicki J."/>
            <person name="Ozersky P."/>
            <person name="Bielicki L."/>
            <person name="Scott K."/>
            <person name="Holmes A."/>
            <person name="Harkins R."/>
            <person name="Harris A."/>
            <person name="Strong C.M."/>
            <person name="Hou S."/>
            <person name="Tomlinson C."/>
            <person name="Dauphin-Kohlberg S."/>
            <person name="Kozlowicz-Reilly A."/>
            <person name="Leonard S."/>
            <person name="Rohlfing T."/>
            <person name="Rock S.M."/>
            <person name="Tin-Wollam A.-M."/>
            <person name="Abbott A."/>
            <person name="Minx P."/>
            <person name="Maupin R."/>
            <person name="Strowmatt C."/>
            <person name="Latreille P."/>
            <person name="Miller N."/>
            <person name="Johnson D."/>
            <person name="Murray J."/>
            <person name="Woessner J.P."/>
            <person name="Wendl M.C."/>
            <person name="Yang S.-P."/>
            <person name="Schultz B.R."/>
            <person name="Wallis J.W."/>
            <person name="Spieth J."/>
            <person name="Bieri T.A."/>
            <person name="Nelson J.O."/>
            <person name="Berkowicz N."/>
            <person name="Wohldmann P.E."/>
            <person name="Cook L.L."/>
            <person name="Hickenbotham M.T."/>
            <person name="Eldred J."/>
            <person name="Williams D."/>
            <person name="Bedell J.A."/>
            <person name="Mardis E.R."/>
            <person name="Clifton S.W."/>
            <person name="Chissoe S.L."/>
            <person name="Marra M.A."/>
            <person name="Raymond C."/>
            <person name="Haugen E."/>
            <person name="Gillett W."/>
            <person name="Zhou Y."/>
            <person name="James R."/>
            <person name="Phelps K."/>
            <person name="Iadanoto S."/>
            <person name="Bubb K."/>
            <person name="Simms E."/>
            <person name="Levy R."/>
            <person name="Clendenning J."/>
            <person name="Kaul R."/>
            <person name="Kent W.J."/>
            <person name="Furey T.S."/>
            <person name="Baertsch R.A."/>
            <person name="Brent M.R."/>
            <person name="Keibler E."/>
            <person name="Flicek P."/>
            <person name="Bork P."/>
            <person name="Suyama M."/>
            <person name="Bailey J.A."/>
            <person name="Portnoy M.E."/>
            <person name="Torrents D."/>
            <person name="Chinwalla A.T."/>
            <person name="Gish W.R."/>
            <person name="Eddy S.R."/>
            <person name="McPherson J.D."/>
            <person name="Olson M.V."/>
            <person name="Eichler E.E."/>
            <person name="Green E.D."/>
            <person name="Waterston R.H."/>
            <person name="Wilson R.K."/>
        </authorList>
    </citation>
    <scope>NUCLEOTIDE SEQUENCE [LARGE SCALE GENOMIC DNA]</scope>
</reference>
<reference key="3">
    <citation type="submission" date="2001-07" db="EMBL/GenBank/DDBJ databases">
        <authorList>
            <person name="Mural R.J."/>
            <person name="Istrail S."/>
            <person name="Sutton G.G."/>
            <person name="Florea L."/>
            <person name="Halpern A.L."/>
            <person name="Mobarry C.M."/>
            <person name="Lippert R."/>
            <person name="Walenz B."/>
            <person name="Shatkay H."/>
            <person name="Dew I."/>
            <person name="Miller J.R."/>
            <person name="Flanigan M.J."/>
            <person name="Edwards N.J."/>
            <person name="Bolanos R."/>
            <person name="Fasulo D."/>
            <person name="Halldorsson B.V."/>
            <person name="Hannenhalli S."/>
            <person name="Turner R."/>
            <person name="Yooseph S."/>
            <person name="Lu F."/>
            <person name="Nusskern D.R."/>
            <person name="Shue B.C."/>
            <person name="Zheng X.H."/>
            <person name="Zhong F."/>
            <person name="Delcher A.L."/>
            <person name="Huson D.H."/>
            <person name="Kravitz S.A."/>
            <person name="Mouchard L."/>
            <person name="Reinert K."/>
            <person name="Remington K.A."/>
            <person name="Clark A.G."/>
            <person name="Waterman M.S."/>
            <person name="Eichler E.E."/>
            <person name="Adams M.D."/>
            <person name="Hunkapiller M.W."/>
            <person name="Myers E.W."/>
            <person name="Venter J.C."/>
        </authorList>
    </citation>
    <scope>NUCLEOTIDE SEQUENCE [LARGE SCALE GENOMIC DNA]</scope>
</reference>
<reference key="4">
    <citation type="journal article" date="2004" name="Genome Res.">
        <title>The status, quality, and expansion of the NIH full-length cDNA project: the Mammalian Gene Collection (MGC).</title>
        <authorList>
            <consortium name="The MGC Project Team"/>
        </authorList>
    </citation>
    <scope>NUCLEOTIDE SEQUENCE [LARGE SCALE MRNA] (ISOFORM 3)</scope>
    <scope>NUCLEOTIDE SEQUENCE [LARGE SCALE MRNA] OF 476-718 (ISOFORM 4)</scope>
    <source>
        <tissue>Skin</tissue>
    </source>
</reference>
<reference key="5">
    <citation type="journal article" date="2011" name="BMC Syst. Biol.">
        <title>Initial characterization of the human central proteome.</title>
        <authorList>
            <person name="Burkard T.R."/>
            <person name="Planyavsky M."/>
            <person name="Kaupe I."/>
            <person name="Breitwieser F.P."/>
            <person name="Buerckstuemmer T."/>
            <person name="Bennett K.L."/>
            <person name="Superti-Furga G."/>
            <person name="Colinge J."/>
        </authorList>
    </citation>
    <scope>IDENTIFICATION BY MASS SPECTROMETRY [LARGE SCALE ANALYSIS]</scope>
</reference>
<sequence length="718" mass="78919">MASSGEDISNDDDDMHPAAAGMADGVHLLGFSDEILLHILSHVPSTDLILNVRRTCRKLAALCLDKSLIHTVLLQKDYQASEDKVRQLVKEIGREIQQLSMAGCYWLPGSTVEHVARCRSLVKVNLSGCHLTSLRLSKMLSALQHLRSLAIDVSPGFDASQLSSECKATLSRVRELKQTLFTPSYGVVPCCTSLEKLLLYFEILDRTREGAILSGQLMVGQSNVPHYQNLRVFYARLAPGYINQEVVRLYLAVLSDRTPQNLHAFLISVPGSFAESGATKNLLDSMARNVVLDALQLPKSWLNGSSLLQHMKFNNPFYFSFSRCTLSGGHLIQQVINGGKDLRSLASLNLSGCVHCLSPDSLLRKAEDDIDSSILETLVASCCNLRHLNLSAAHHHSSEGLGRHLCQLLARLRHLRSLSLPVCSVADSAPRADRAPAQPAMHAVPRGFGKKVRVGVQSCPSPFSGQACPQPSSVFWSLLKNLPFLEHLELIGSNFSSAMPRNEPAIRNSLPPCSRAQSVGDSEVAAIGQLAFLRHLTLAQLPSVLTGSGLVNIGLQCQQLRSLSLANLGMMGKVVYMPALSDMLKHCKRLRDLRLEQPYFSANAQFFQALSQCPSLQRLCLVSRSGTLQPDAVLAFMARCLQVVMCHLFTGESLATCKSLQQSLLRSFQAERPALNVVIFPLLHEGLTDVIRDVPLVHLDEITLFKSRVAEEPPNLWW</sequence>
<name>FXL18_HUMAN</name>
<protein>
    <recommendedName>
        <fullName>F-box/LRR-repeat protein 18</fullName>
    </recommendedName>
    <alternativeName>
        <fullName>F-box and leucine-rich repeat protein 18</fullName>
    </alternativeName>
</protein>
<proteinExistence type="evidence at protein level"/>
<comment type="function">
    <text evidence="1">Substrate-recognition component of the SCF (SKP1-CUL1-F-box protein)-type E3 ubiquitin ligase complex.</text>
</comment>
<comment type="subunit">
    <text evidence="1">Directly interacts with SKP1 and CUL1.</text>
</comment>
<comment type="alternative products">
    <event type="alternative splicing"/>
    <isoform>
        <id>Q96ME1-4</id>
        <name>4</name>
        <sequence type="displayed"/>
    </isoform>
    <isoform>
        <id>Q96ME1-1</id>
        <name>1</name>
        <sequence type="described" ref="VSP_061756"/>
    </isoform>
    <isoform>
        <id>Q96ME1-2</id>
        <name>2</name>
        <sequence type="described" ref="VSP_061758 VSP_061759"/>
    </isoform>
    <isoform>
        <id>Q96ME1-3</id>
        <name>3</name>
        <sequence type="described" ref="VSP_061754 VSP_061755"/>
    </isoform>
    <isoform>
        <id>Q96ME1-5</id>
        <name>5</name>
        <sequence type="described" ref="VSP_061757"/>
    </isoform>
</comment>
<comment type="sequence caution" evidence="4">
    <conflict type="erroneous initiation">
        <sequence resource="EMBL-CDS" id="BAB13838"/>
    </conflict>
    <text>Truncated N-terminus.</text>
</comment>
<comment type="sequence caution" evidence="4">
    <conflict type="erroneous initiation">
        <sequence resource="EMBL-CDS" id="BAG53041"/>
    </conflict>
    <text>Truncated N-terminus.</text>
</comment>
<accession>Q96ME1</accession>
<accession>A0A024R857</accession>
<accession>B3KTC9</accession>
<accession>B4DH63</accession>
<accession>H0Y6I6</accession>
<accession>Q9BR90</accession>
<accession>Q9BTC7</accession>
<accession>Q9HAK7</accession>
<keyword id="KW-0025">Alternative splicing</keyword>
<keyword id="KW-0433">Leucine-rich repeat</keyword>
<keyword id="KW-1267">Proteomics identification</keyword>
<keyword id="KW-1185">Reference proteome</keyword>
<keyword id="KW-0677">Repeat</keyword>
<keyword id="KW-0833">Ubl conjugation pathway</keyword>